<gene>
    <name evidence="4" type="primary">DEP4</name>
    <name type="ORF">FLAG1_09233</name>
</gene>
<evidence type="ECO:0000250" key="1">
    <source>
        <dbReference type="UniProtKB" id="Q47PU3"/>
    </source>
</evidence>
<evidence type="ECO:0000269" key="2">
    <source>
    </source>
</evidence>
<evidence type="ECO:0000269" key="3">
    <source>
    </source>
</evidence>
<evidence type="ECO:0000303" key="4">
    <source>
    </source>
</evidence>
<evidence type="ECO:0000305" key="5"/>
<evidence type="ECO:0000305" key="6">
    <source>
    </source>
</evidence>
<evidence type="ECO:0000305" key="7">
    <source>
    </source>
</evidence>
<accession>A0A0M9ER62</accession>
<organism>
    <name type="scientific">Fusarium langsethiae</name>
    <dbReference type="NCBI Taxonomy" id="179993"/>
    <lineage>
        <taxon>Eukaryota</taxon>
        <taxon>Fungi</taxon>
        <taxon>Dikarya</taxon>
        <taxon>Ascomycota</taxon>
        <taxon>Pezizomycotina</taxon>
        <taxon>Sordariomycetes</taxon>
        <taxon>Hypocreomycetidae</taxon>
        <taxon>Hypocreales</taxon>
        <taxon>Nectriaceae</taxon>
        <taxon>Fusarium</taxon>
    </lineage>
</organism>
<reference key="1">
    <citation type="submission" date="2015-04" db="EMBL/GenBank/DDBJ databases">
        <title>The draft genome sequence of Fusarium langsethiae, a T-2/HT-2 mycotoxin producer.</title>
        <authorList>
            <person name="Lysoe E."/>
            <person name="Divon H.H."/>
            <person name="Terzi V."/>
            <person name="Orru L."/>
            <person name="Lamontanara A."/>
            <person name="Kolseth A.-K."/>
            <person name="Frandsen R.J."/>
            <person name="Nielsen K."/>
            <person name="Thrane U."/>
        </authorList>
    </citation>
    <scope>NUCLEOTIDE SEQUENCE [LARGE SCALE GENOMIC DNA]</scope>
    <source>
        <strain>Fl201059</strain>
    </source>
</reference>
<reference key="2">
    <citation type="journal article" date="2009" name="Mol. Plant Microbe Interact.">
        <title>Biosynthesis and role in virulence of the histone deacetylase inhibitor depudecin from Alternaria brassicicola.</title>
        <authorList>
            <person name="Wight W.D."/>
            <person name="Kim K.-H."/>
            <person name="Lawrence C.B."/>
            <person name="Walton J.D."/>
        </authorList>
    </citation>
    <scope>FUNCTION</scope>
</reference>
<reference key="3">
    <citation type="journal article" date="2017" name="Mol. Biol. Evol.">
        <title>Differential retention of gene functions in a secondary metabolite cluster.</title>
        <authorList>
            <person name="Reynolds H."/>
            <person name="Slot J.C."/>
            <person name="Divon H.H."/>
            <person name="Lysoee E."/>
            <person name="Proctor R.H."/>
            <person name="Brown D.W."/>
        </authorList>
    </citation>
    <scope>FUNCTION</scope>
    <scope>INDUCTION</scope>
    <scope>PATHWAY</scope>
</reference>
<name>DEP4_FUSLA</name>
<dbReference type="EC" id="1.-.-.-" evidence="6"/>
<dbReference type="EMBL" id="JXCE01000338">
    <property type="protein sequence ID" value="KPA37942.1"/>
    <property type="molecule type" value="Genomic_DNA"/>
</dbReference>
<dbReference type="SMR" id="A0A0M9ER62"/>
<dbReference type="OrthoDB" id="2915840at2759"/>
<dbReference type="Proteomes" id="UP000037904">
    <property type="component" value="Unassembled WGS sequence"/>
</dbReference>
<dbReference type="GO" id="GO:0004497">
    <property type="term" value="F:monooxygenase activity"/>
    <property type="evidence" value="ECO:0007669"/>
    <property type="project" value="UniProtKB-KW"/>
</dbReference>
<dbReference type="Gene3D" id="3.50.50.60">
    <property type="entry name" value="FAD/NAD(P)-binding domain"/>
    <property type="match status" value="2"/>
</dbReference>
<dbReference type="InterPro" id="IPR036188">
    <property type="entry name" value="FAD/NAD-bd_sf"/>
</dbReference>
<dbReference type="InterPro" id="IPR050346">
    <property type="entry name" value="FMO-like"/>
</dbReference>
<dbReference type="PANTHER" id="PTHR23023">
    <property type="entry name" value="DIMETHYLANILINE MONOOXYGENASE"/>
    <property type="match status" value="1"/>
</dbReference>
<dbReference type="Pfam" id="PF13738">
    <property type="entry name" value="Pyr_redox_3"/>
    <property type="match status" value="1"/>
</dbReference>
<dbReference type="SUPFAM" id="SSF51905">
    <property type="entry name" value="FAD/NAD(P)-binding domain"/>
    <property type="match status" value="2"/>
</dbReference>
<proteinExistence type="evidence at transcript level"/>
<feature type="chain" id="PRO_0000441942" description="FAD-dependent monooxygenase DEP4">
    <location>
        <begin position="1"/>
        <end position="580"/>
    </location>
</feature>
<feature type="binding site" evidence="1">
    <location>
        <begin position="47"/>
        <end position="50"/>
    </location>
    <ligand>
        <name>FAD</name>
        <dbReference type="ChEBI" id="CHEBI:57692"/>
    </ligand>
</feature>
<feature type="binding site" evidence="1">
    <location>
        <begin position="58"/>
        <end position="60"/>
    </location>
    <ligand>
        <name>NADP(+)</name>
        <dbReference type="ChEBI" id="CHEBI:58349"/>
    </ligand>
</feature>
<feature type="binding site" evidence="1">
    <location>
        <position position="112"/>
    </location>
    <ligand>
        <name>FAD</name>
        <dbReference type="ChEBI" id="CHEBI:57692"/>
    </ligand>
</feature>
<feature type="binding site" evidence="1">
    <location>
        <begin position="186"/>
        <end position="205"/>
    </location>
    <ligand>
        <name>NADP(+)</name>
        <dbReference type="ChEBI" id="CHEBI:58349"/>
    </ligand>
</feature>
<feature type="binding site" evidence="1">
    <location>
        <begin position="222"/>
        <end position="223"/>
    </location>
    <ligand>
        <name>NADP(+)</name>
        <dbReference type="ChEBI" id="CHEBI:58349"/>
    </ligand>
</feature>
<feature type="binding site" evidence="1">
    <location>
        <begin position="354"/>
        <end position="355"/>
    </location>
    <ligand>
        <name>NADP(+)</name>
        <dbReference type="ChEBI" id="CHEBI:58349"/>
    </ligand>
</feature>
<feature type="binding site" evidence="1">
    <location>
        <position position="473"/>
    </location>
    <ligand>
        <name>FAD</name>
        <dbReference type="ChEBI" id="CHEBI:57692"/>
    </ligand>
</feature>
<protein>
    <recommendedName>
        <fullName evidence="4">FAD-dependent monooxygenase DEP4</fullName>
        <ecNumber evidence="6">1.-.-.-</ecNumber>
    </recommendedName>
    <alternativeName>
        <fullName evidence="4">Depudecin biosynthesis cluster protein 1</fullName>
    </alternativeName>
</protein>
<comment type="function">
    <text evidence="2 3">Part of the gene cluster that mediates the biosynthesis of depudecin, a highly oxidized eleven-carbon linear polyketide that acts as a histone deacetylase (HDAC) inhibitor and makes a small contribution to pathogenesis (PubMed:19737099, PubMed:28460114). The reducing polyketide synthase DEP5 is the central enzyme in depudecin biosynthesis by yielding the backbone polyketide chain (PubMed:19737099). The monooxygenases DEP2 and DEP4, as well as the uncharacterized protein DEP1, then act as tailoring enzymes to modify the intermediate polyketide chain into depudecin (PubMed:19737099).</text>
</comment>
<comment type="cofactor">
    <cofactor evidence="5">
        <name>FAD</name>
        <dbReference type="ChEBI" id="CHEBI:57692"/>
    </cofactor>
</comment>
<comment type="pathway">
    <text evidence="7">Polyketide biosynthesis.</text>
</comment>
<comment type="induction">
    <text evidence="3">Expression correlates with the production of depudecin with high levels on oat grain medium, and minimal levels on oat flower medium and complete medium (PubMed:28460114).</text>
</comment>
<comment type="similarity">
    <text evidence="5">Belongs to the FAD-binding monooxygenase family.</text>
</comment>
<sequence>MSQPLETFDVIVIGAGWYGLMAARTFLELAPDTNLLILDDGKTVGGVWSKERIYPSLFAQISHPLFEYSFYPMPEEDISPDGFVSGKTIQKYLEAFAKDHGLILHLRLETRVEKVKRGVNSNEWILEIKGDKPLACSKLIYATGANSSPIIPKWPREGFEKPVIHSLDLGRYQDYIANNVQKAVVVGRSKSSYDAVYHLLCAGKKVNWVMRDGQSGPFSLYAPTFMGLWNIADHISTRFASSFSPCIMSTDGFCYNFFQRSALGRVLTNMYWRTANYLSVSHAEYWRTENSEKLRPRPYSDGVFWGSGGIGIATAPDFWETFHRGDVTIHSTEIESVSHKDVTNLKNGYSIATDIIIHCTGFDKGYGAFDPQLRNELGLEYNTKEFSRWTMLDEKADQTVDRLLPYICDSPNQYGDSEASRSTGQGPNRHYRRLVVPELAARGDRSILFPGHIHSAFTPLAAELQALWGVSWMLGWRDLPSKEEMETEAANFNAWTRKRYLEQGRKHSYFIYDYIPYIDTLMKDLGLDPFRKSNVFEEWFVRYKPSDYKTILEEYRSVRRHEREMERSGEESVARMKRCD</sequence>
<keyword id="KW-0274">FAD</keyword>
<keyword id="KW-0285">Flavoprotein</keyword>
<keyword id="KW-0503">Monooxygenase</keyword>
<keyword id="KW-0521">NADP</keyword>
<keyword id="KW-0560">Oxidoreductase</keyword>
<keyword id="KW-1185">Reference proteome</keyword>